<feature type="chain" id="PRO_0000257164" description="UDP-N-acetylmuramoylalanine--D-glutamate ligase">
    <location>
        <begin position="1"/>
        <end position="455"/>
    </location>
</feature>
<feature type="binding site" evidence="1">
    <location>
        <begin position="112"/>
        <end position="118"/>
    </location>
    <ligand>
        <name>ATP</name>
        <dbReference type="ChEBI" id="CHEBI:30616"/>
    </ligand>
</feature>
<reference key="1">
    <citation type="journal article" date="2014" name="Stand. Genomic Sci.">
        <title>Complete genome sequence of Anabaena variabilis ATCC 29413.</title>
        <authorList>
            <person name="Thiel T."/>
            <person name="Pratte B.S."/>
            <person name="Zhong J."/>
            <person name="Goodwin L."/>
            <person name="Copeland A."/>
            <person name="Lucas S."/>
            <person name="Han C."/>
            <person name="Pitluck S."/>
            <person name="Land M.L."/>
            <person name="Kyrpides N.C."/>
            <person name="Woyke T."/>
        </authorList>
    </citation>
    <scope>NUCLEOTIDE SEQUENCE [LARGE SCALE GENOMIC DNA]</scope>
    <source>
        <strain>ATCC 29413 / PCC 7937</strain>
    </source>
</reference>
<gene>
    <name evidence="1" type="primary">murD</name>
    <name type="ordered locus">Ava_0793</name>
</gene>
<accession>Q3MF19</accession>
<dbReference type="EC" id="6.3.2.9" evidence="1"/>
<dbReference type="EMBL" id="CP000117">
    <property type="protein sequence ID" value="ABA20417.1"/>
    <property type="molecule type" value="Genomic_DNA"/>
</dbReference>
<dbReference type="SMR" id="Q3MF19"/>
<dbReference type="STRING" id="240292.Ava_0793"/>
<dbReference type="KEGG" id="ava:Ava_0793"/>
<dbReference type="eggNOG" id="COG0771">
    <property type="taxonomic scope" value="Bacteria"/>
</dbReference>
<dbReference type="HOGENOM" id="CLU_032540_0_0_3"/>
<dbReference type="UniPathway" id="UPA00219"/>
<dbReference type="Proteomes" id="UP000002533">
    <property type="component" value="Chromosome"/>
</dbReference>
<dbReference type="GO" id="GO:0005737">
    <property type="term" value="C:cytoplasm"/>
    <property type="evidence" value="ECO:0007669"/>
    <property type="project" value="UniProtKB-SubCell"/>
</dbReference>
<dbReference type="GO" id="GO:0005524">
    <property type="term" value="F:ATP binding"/>
    <property type="evidence" value="ECO:0007669"/>
    <property type="project" value="UniProtKB-UniRule"/>
</dbReference>
<dbReference type="GO" id="GO:0008764">
    <property type="term" value="F:UDP-N-acetylmuramoylalanine-D-glutamate ligase activity"/>
    <property type="evidence" value="ECO:0007669"/>
    <property type="project" value="UniProtKB-UniRule"/>
</dbReference>
<dbReference type="GO" id="GO:0051301">
    <property type="term" value="P:cell division"/>
    <property type="evidence" value="ECO:0007669"/>
    <property type="project" value="UniProtKB-KW"/>
</dbReference>
<dbReference type="GO" id="GO:0071555">
    <property type="term" value="P:cell wall organization"/>
    <property type="evidence" value="ECO:0007669"/>
    <property type="project" value="UniProtKB-KW"/>
</dbReference>
<dbReference type="GO" id="GO:0009252">
    <property type="term" value="P:peptidoglycan biosynthetic process"/>
    <property type="evidence" value="ECO:0007669"/>
    <property type="project" value="UniProtKB-UniRule"/>
</dbReference>
<dbReference type="GO" id="GO:0008360">
    <property type="term" value="P:regulation of cell shape"/>
    <property type="evidence" value="ECO:0007669"/>
    <property type="project" value="UniProtKB-KW"/>
</dbReference>
<dbReference type="Gene3D" id="3.90.190.20">
    <property type="entry name" value="Mur ligase, C-terminal domain"/>
    <property type="match status" value="1"/>
</dbReference>
<dbReference type="Gene3D" id="3.40.1190.10">
    <property type="entry name" value="Mur-like, catalytic domain"/>
    <property type="match status" value="1"/>
</dbReference>
<dbReference type="Gene3D" id="3.40.50.720">
    <property type="entry name" value="NAD(P)-binding Rossmann-like Domain"/>
    <property type="match status" value="1"/>
</dbReference>
<dbReference type="HAMAP" id="MF_00639">
    <property type="entry name" value="MurD"/>
    <property type="match status" value="1"/>
</dbReference>
<dbReference type="InterPro" id="IPR036565">
    <property type="entry name" value="Mur-like_cat_sf"/>
</dbReference>
<dbReference type="InterPro" id="IPR004101">
    <property type="entry name" value="Mur_ligase_C"/>
</dbReference>
<dbReference type="InterPro" id="IPR036615">
    <property type="entry name" value="Mur_ligase_C_dom_sf"/>
</dbReference>
<dbReference type="InterPro" id="IPR013221">
    <property type="entry name" value="Mur_ligase_cen"/>
</dbReference>
<dbReference type="InterPro" id="IPR005762">
    <property type="entry name" value="MurD"/>
</dbReference>
<dbReference type="NCBIfam" id="TIGR01087">
    <property type="entry name" value="murD"/>
    <property type="match status" value="1"/>
</dbReference>
<dbReference type="PANTHER" id="PTHR43692">
    <property type="entry name" value="UDP-N-ACETYLMURAMOYLALANINE--D-GLUTAMATE LIGASE"/>
    <property type="match status" value="1"/>
</dbReference>
<dbReference type="PANTHER" id="PTHR43692:SF1">
    <property type="entry name" value="UDP-N-ACETYLMURAMOYLALANINE--D-GLUTAMATE LIGASE"/>
    <property type="match status" value="1"/>
</dbReference>
<dbReference type="Pfam" id="PF02875">
    <property type="entry name" value="Mur_ligase_C"/>
    <property type="match status" value="1"/>
</dbReference>
<dbReference type="Pfam" id="PF08245">
    <property type="entry name" value="Mur_ligase_M"/>
    <property type="match status" value="1"/>
</dbReference>
<dbReference type="Pfam" id="PF21799">
    <property type="entry name" value="MurD-like_N"/>
    <property type="match status" value="1"/>
</dbReference>
<dbReference type="SUPFAM" id="SSF51984">
    <property type="entry name" value="MurCD N-terminal domain"/>
    <property type="match status" value="1"/>
</dbReference>
<dbReference type="SUPFAM" id="SSF53623">
    <property type="entry name" value="MurD-like peptide ligases, catalytic domain"/>
    <property type="match status" value="1"/>
</dbReference>
<dbReference type="SUPFAM" id="SSF53244">
    <property type="entry name" value="MurD-like peptide ligases, peptide-binding domain"/>
    <property type="match status" value="1"/>
</dbReference>
<sequence>MSKAHVVGLGKSGVAAARLLKREGWEVVLSDRNTSDTLLKQQQELAKEQITVELGYSLDFAGALPDLIVVSPGVPWDIPALVKARELGIETIGEMELAWRHLKSLPWVGITGTNGKTTTTALIAAIFQAAGFDAPACGNIGYAACEVALAATPPDWIIGEMSSYQIESSLTLAPHISIWTTFTPDHLARHKTLENYYDIKAKLLRQSHLQVFNGDDAYLSKIGASHWPDAYWTSVKGKDYLIGDKGFYIEDGWVVEQLQPNSSPQRIVAAEALRMVGAHNLQNLLMAVAAARLADIPPNAIDKAVREFPGVAHRLEHICTWQGIDFINDSKATNYDAAEVGLASVKSPVILIAGGEAKPGDDAAWLAKIQGQTSAVLLIGNAAPAFAQRLQEIGYSNYEIVETMEQAVRRSLDLAKHHQAPVVLLSPACASFDQYPNFEARGDHFRQLCLELVGS</sequence>
<proteinExistence type="inferred from homology"/>
<organism>
    <name type="scientific">Trichormus variabilis (strain ATCC 29413 / PCC 7937)</name>
    <name type="common">Anabaena variabilis</name>
    <dbReference type="NCBI Taxonomy" id="240292"/>
    <lineage>
        <taxon>Bacteria</taxon>
        <taxon>Bacillati</taxon>
        <taxon>Cyanobacteriota</taxon>
        <taxon>Cyanophyceae</taxon>
        <taxon>Nostocales</taxon>
        <taxon>Nostocaceae</taxon>
        <taxon>Trichormus</taxon>
    </lineage>
</organism>
<evidence type="ECO:0000255" key="1">
    <source>
        <dbReference type="HAMAP-Rule" id="MF_00639"/>
    </source>
</evidence>
<comment type="function">
    <text evidence="1">Cell wall formation. Catalyzes the addition of glutamate to the nucleotide precursor UDP-N-acetylmuramoyl-L-alanine (UMA).</text>
</comment>
<comment type="catalytic activity">
    <reaction evidence="1">
        <text>UDP-N-acetyl-alpha-D-muramoyl-L-alanine + D-glutamate + ATP = UDP-N-acetyl-alpha-D-muramoyl-L-alanyl-D-glutamate + ADP + phosphate + H(+)</text>
        <dbReference type="Rhea" id="RHEA:16429"/>
        <dbReference type="ChEBI" id="CHEBI:15378"/>
        <dbReference type="ChEBI" id="CHEBI:29986"/>
        <dbReference type="ChEBI" id="CHEBI:30616"/>
        <dbReference type="ChEBI" id="CHEBI:43474"/>
        <dbReference type="ChEBI" id="CHEBI:83898"/>
        <dbReference type="ChEBI" id="CHEBI:83900"/>
        <dbReference type="ChEBI" id="CHEBI:456216"/>
        <dbReference type="EC" id="6.3.2.9"/>
    </reaction>
</comment>
<comment type="pathway">
    <text evidence="1">Cell wall biogenesis; peptidoglycan biosynthesis.</text>
</comment>
<comment type="subcellular location">
    <subcellularLocation>
        <location evidence="1">Cytoplasm</location>
    </subcellularLocation>
</comment>
<comment type="similarity">
    <text evidence="1">Belongs to the MurCDEF family.</text>
</comment>
<protein>
    <recommendedName>
        <fullName evidence="1">UDP-N-acetylmuramoylalanine--D-glutamate ligase</fullName>
        <ecNumber evidence="1">6.3.2.9</ecNumber>
    </recommendedName>
    <alternativeName>
        <fullName evidence="1">D-glutamic acid-adding enzyme</fullName>
    </alternativeName>
    <alternativeName>
        <fullName evidence="1">UDP-N-acetylmuramoyl-L-alanyl-D-glutamate synthetase</fullName>
    </alternativeName>
</protein>
<keyword id="KW-0067">ATP-binding</keyword>
<keyword id="KW-0131">Cell cycle</keyword>
<keyword id="KW-0132">Cell division</keyword>
<keyword id="KW-0133">Cell shape</keyword>
<keyword id="KW-0961">Cell wall biogenesis/degradation</keyword>
<keyword id="KW-0963">Cytoplasm</keyword>
<keyword id="KW-0436">Ligase</keyword>
<keyword id="KW-0547">Nucleotide-binding</keyword>
<keyword id="KW-0573">Peptidoglycan synthesis</keyword>
<name>MURD_TRIV2</name>